<gene>
    <name type="primary">Mc1r</name>
    <name type="synonym">Msh-r</name>
</gene>
<organism>
    <name type="scientific">Mus musculus</name>
    <name type="common">Mouse</name>
    <dbReference type="NCBI Taxonomy" id="10090"/>
    <lineage>
        <taxon>Eukaryota</taxon>
        <taxon>Metazoa</taxon>
        <taxon>Chordata</taxon>
        <taxon>Craniata</taxon>
        <taxon>Vertebrata</taxon>
        <taxon>Euteleostomi</taxon>
        <taxon>Mammalia</taxon>
        <taxon>Eutheria</taxon>
        <taxon>Euarchontoglires</taxon>
        <taxon>Glires</taxon>
        <taxon>Rodentia</taxon>
        <taxon>Myomorpha</taxon>
        <taxon>Muroidea</taxon>
        <taxon>Muridae</taxon>
        <taxon>Murinae</taxon>
        <taxon>Mus</taxon>
        <taxon>Mus</taxon>
    </lineage>
</organism>
<keyword id="KW-1003">Cell membrane</keyword>
<keyword id="KW-0297">G-protein coupled receptor</keyword>
<keyword id="KW-0325">Glycoprotein</keyword>
<keyword id="KW-0449">Lipoprotein</keyword>
<keyword id="KW-0472">Membrane</keyword>
<keyword id="KW-0564">Palmitate</keyword>
<keyword id="KW-0675">Receptor</keyword>
<keyword id="KW-1185">Reference proteome</keyword>
<keyword id="KW-0807">Transducer</keyword>
<keyword id="KW-0812">Transmembrane</keyword>
<keyword id="KW-1133">Transmembrane helix</keyword>
<protein>
    <recommendedName>
        <fullName>Melanocyte-stimulating hormone receptor</fullName>
        <shortName>MSH-R</shortName>
    </recommendedName>
    <alternativeName>
        <fullName>Melanocortin receptor 1</fullName>
        <shortName>MC1-R</shortName>
    </alternativeName>
</protein>
<reference key="1">
    <citation type="journal article" date="1992" name="Science">
        <title>The cloning of a family of genes that encode the melanocortin receptors.</title>
        <authorList>
            <person name="Mountjoy K.G."/>
            <person name="Robbins L.S."/>
            <person name="Mortrud M."/>
            <person name="Cone R.D."/>
        </authorList>
    </citation>
    <scope>NUCLEOTIDE SEQUENCE [MRNA]</scope>
    <scope>FUNCTION</scope>
    <source>
        <tissue>Skin</tissue>
    </source>
</reference>
<reference key="2">
    <citation type="journal article" date="2005" name="J. Hered.">
        <title>A nucleotide substitution responsible for the tawny coat color mutation carried by the MSKR inbred strain of mice.</title>
        <authorList>
            <person name="Wada A."/>
            <person name="Kunieda T."/>
            <person name="Nishimura M."/>
            <person name="Kakizoe-Ishida Y."/>
            <person name="Watanabe N."/>
            <person name="Ohkawa K."/>
            <person name="Tsudzuki M."/>
        </authorList>
    </citation>
    <scope>NUCLEOTIDE SEQUENCE [GENOMIC DNA]</scope>
    <source>
        <strain>MSM/Ms</strain>
    </source>
</reference>
<reference key="3">
    <citation type="submission" date="2005-07" db="EMBL/GenBank/DDBJ databases">
        <authorList>
            <person name="Mural R.J."/>
            <person name="Adams M.D."/>
            <person name="Myers E.W."/>
            <person name="Smith H.O."/>
            <person name="Venter J.C."/>
        </authorList>
    </citation>
    <scope>NUCLEOTIDE SEQUENCE [LARGE SCALE GENOMIC DNA]</scope>
</reference>
<reference key="4">
    <citation type="journal article" date="2004" name="Genome Res.">
        <title>The status, quality, and expansion of the NIH full-length cDNA project: the Mammalian Gene Collection (MGC).</title>
        <authorList>
            <consortium name="The MGC Project Team"/>
        </authorList>
    </citation>
    <scope>NUCLEOTIDE SEQUENCE [LARGE SCALE MRNA]</scope>
    <source>
        <tissue>Brain</tissue>
    </source>
</reference>
<feature type="chain" id="PRO_0000069834" description="Melanocyte-stimulating hormone receptor">
    <location>
        <begin position="1"/>
        <end position="315"/>
    </location>
</feature>
<feature type="topological domain" description="Extracellular" evidence="2">
    <location>
        <begin position="1"/>
        <end position="35"/>
    </location>
</feature>
<feature type="transmembrane region" description="Helical; Name=1" evidence="2">
    <location>
        <begin position="36"/>
        <end position="61"/>
    </location>
</feature>
<feature type="topological domain" description="Cytoplasmic" evidence="2">
    <location>
        <begin position="62"/>
        <end position="70"/>
    </location>
</feature>
<feature type="transmembrane region" description="Helical; Name=2" evidence="2">
    <location>
        <begin position="71"/>
        <end position="91"/>
    </location>
</feature>
<feature type="topological domain" description="Extracellular" evidence="2">
    <location>
        <begin position="92"/>
        <end position="116"/>
    </location>
</feature>
<feature type="transmembrane region" description="Helical; Name=3" evidence="2">
    <location>
        <begin position="117"/>
        <end position="138"/>
    </location>
</feature>
<feature type="topological domain" description="Cytoplasmic" evidence="2">
    <location>
        <begin position="139"/>
        <end position="161"/>
    </location>
</feature>
<feature type="transmembrane region" description="Helical; Name=4" evidence="2">
    <location>
        <begin position="162"/>
        <end position="181"/>
    </location>
</feature>
<feature type="topological domain" description="Extracellular" evidence="2">
    <location>
        <begin position="182"/>
        <end position="189"/>
    </location>
</feature>
<feature type="transmembrane region" description="Helical; Name=5" evidence="2">
    <location>
        <begin position="190"/>
        <end position="209"/>
    </location>
</feature>
<feature type="topological domain" description="Cytoplasmic" evidence="2">
    <location>
        <begin position="210"/>
        <end position="238"/>
    </location>
</feature>
<feature type="transmembrane region" description="Helical; Name=6" evidence="2">
    <location>
        <begin position="239"/>
        <end position="264"/>
    </location>
</feature>
<feature type="topological domain" description="Extracellular" evidence="2">
    <location>
        <begin position="265"/>
        <end position="277"/>
    </location>
</feature>
<feature type="transmembrane region" description="Helical; Name=7" evidence="2">
    <location>
        <begin position="278"/>
        <end position="298"/>
    </location>
</feature>
<feature type="topological domain" description="Cytoplasmic" evidence="2">
    <location>
        <begin position="299"/>
        <end position="315"/>
    </location>
</feature>
<feature type="lipid moiety-binding region" description="S-palmitoyl cysteine" evidence="2">
    <location>
        <position position="313"/>
    </location>
</feature>
<feature type="glycosylation site" description="N-linked (GlcNAc...) asparagine" evidence="2">
    <location>
        <position position="17"/>
    </location>
</feature>
<feature type="glycosylation site" description="N-linked (GlcNAc...) asparagine" evidence="2">
    <location>
        <position position="27"/>
    </location>
</feature>
<feature type="sequence conflict" description="In Ref. 1; CAA46589." evidence="5" ref="1">
    <original>A</original>
    <variation>V</variation>
    <location>
        <position position="101"/>
    </location>
</feature>
<feature type="sequence conflict" description="In Ref. 1; CAA46589." evidence="5" ref="1">
    <original>A</original>
    <variation>V</variation>
    <location>
        <position position="216"/>
    </location>
</feature>
<sequence length="315" mass="35226">MSTQEPQKSLLGSLNSNATSHLGLATNQSEPWCLYVSIPDGLFLSLGLVSLVENVLVVIAITKNRNLHSPMYYFICCLALSDLMVSVSIVLETTIILLLEAGILVARVALVQQLDNLIDVLICGSMVSSLCFLGIIAIDRYISIFYALRYHSIVTLPRARRAVVGIWMVSIVSSTLFITYYKHTAVLLCLVTFFLAMLALMAILYAHMFTRACQHAQGIAQLHKRRRSIRQGFCLKGAATLTILLGIFFLCWGPFFLHLLLIVLCPQHPTCSCIFKNFNLFLLLIVLSSTVDPLIYAFRSQELRMTLKEVLLCSW</sequence>
<evidence type="ECO:0000250" key="1">
    <source>
        <dbReference type="UniProtKB" id="Q01726"/>
    </source>
</evidence>
<evidence type="ECO:0000255" key="2"/>
<evidence type="ECO:0000255" key="3">
    <source>
        <dbReference type="PROSITE-ProRule" id="PRU00521"/>
    </source>
</evidence>
<evidence type="ECO:0000269" key="4">
    <source>
    </source>
</evidence>
<evidence type="ECO:0000305" key="5"/>
<comment type="function">
    <text evidence="1 4">Receptor for MSH (alpha, beta and gamma) and ACTH (PubMed:1325670). The activity of this receptor is mediated by G proteins which activate adenylate cyclase (PubMed:1325670). Mediates melanogenesis, the production of eumelanin (black/brown) and phaeomelanin (red/yellow), via regulation of cAMP signaling in melanocytes (By similarity).</text>
</comment>
<comment type="subunit">
    <text evidence="1">Interacts with MGRN1, but does not undergo MGRN1-mediated ubiquitination; this interaction competes with GNAS-binding and thus inhibits agonist-induced cAMP production. Interacts with OPN3; the interaction results in a decrease in MC1R-mediated cAMP signaling and ultimately a decrease in melanin production in melanocytes.</text>
</comment>
<comment type="subcellular location">
    <subcellularLocation>
        <location evidence="1">Cell membrane</location>
        <topology evidence="2">Multi-pass membrane protein</topology>
    </subcellularLocation>
</comment>
<comment type="similarity">
    <text evidence="3">Belongs to the G-protein coupled receptor 1 family.</text>
</comment>
<accession>Q01727</accession>
<accession>Q75NA3</accession>
<proteinExistence type="evidence at transcript level"/>
<dbReference type="EMBL" id="X65635">
    <property type="protein sequence ID" value="CAA46589.1"/>
    <property type="molecule type" value="mRNA"/>
</dbReference>
<dbReference type="EMBL" id="AB177607">
    <property type="protein sequence ID" value="BAD16659.1"/>
    <property type="molecule type" value="Genomic_DNA"/>
</dbReference>
<dbReference type="EMBL" id="AB177608">
    <property type="protein sequence ID" value="BAD16660.1"/>
    <property type="molecule type" value="Genomic_DNA"/>
</dbReference>
<dbReference type="EMBL" id="AB306322">
    <property type="protein sequence ID" value="BAG85190.1"/>
    <property type="molecule type" value="Genomic_DNA"/>
</dbReference>
<dbReference type="EMBL" id="CH466525">
    <property type="protein sequence ID" value="EDL11741.1"/>
    <property type="molecule type" value="Genomic_DNA"/>
</dbReference>
<dbReference type="EMBL" id="BC119294">
    <property type="protein sequence ID" value="AAI19295.1"/>
    <property type="molecule type" value="mRNA"/>
</dbReference>
<dbReference type="EMBL" id="BC119296">
    <property type="protein sequence ID" value="AAI19297.1"/>
    <property type="molecule type" value="mRNA"/>
</dbReference>
<dbReference type="CCDS" id="CCDS22756.1"/>
<dbReference type="PIR" id="S25581">
    <property type="entry name" value="S25581"/>
</dbReference>
<dbReference type="RefSeq" id="NP_032585.2">
    <property type="nucleotide sequence ID" value="NM_008559.3"/>
</dbReference>
<dbReference type="SMR" id="Q01727"/>
<dbReference type="BioGRID" id="201338">
    <property type="interactions" value="2"/>
</dbReference>
<dbReference type="FunCoup" id="Q01727">
    <property type="interactions" value="994"/>
</dbReference>
<dbReference type="STRING" id="10090.ENSMUSP00000095929"/>
<dbReference type="BindingDB" id="Q01727"/>
<dbReference type="ChEMBL" id="CHEMBL4077"/>
<dbReference type="DrugCentral" id="Q01727"/>
<dbReference type="GuidetoPHARMACOLOGY" id="282"/>
<dbReference type="GlyCosmos" id="Q01727">
    <property type="glycosylation" value="2 sites, No reported glycans"/>
</dbReference>
<dbReference type="GlyGen" id="Q01727">
    <property type="glycosylation" value="2 sites"/>
</dbReference>
<dbReference type="PhosphoSitePlus" id="Q01727"/>
<dbReference type="PaxDb" id="10090-ENSMUSP00000095929"/>
<dbReference type="Antibodypedia" id="54873">
    <property type="antibodies" value="367 antibodies from 34 providers"/>
</dbReference>
<dbReference type="DNASU" id="17199"/>
<dbReference type="Ensembl" id="ENSMUST00000098324.4">
    <property type="protein sequence ID" value="ENSMUSP00000095929.3"/>
    <property type="gene ID" value="ENSMUSG00000074037.4"/>
</dbReference>
<dbReference type="GeneID" id="17199"/>
<dbReference type="KEGG" id="mmu:17199"/>
<dbReference type="UCSC" id="uc009nvs.2">
    <property type="organism name" value="mouse"/>
</dbReference>
<dbReference type="AGR" id="MGI:99456"/>
<dbReference type="CTD" id="4157"/>
<dbReference type="MGI" id="MGI:99456">
    <property type="gene designation" value="Mc1r"/>
</dbReference>
<dbReference type="VEuPathDB" id="HostDB:ENSMUSG00000074037"/>
<dbReference type="eggNOG" id="KOG3656">
    <property type="taxonomic scope" value="Eukaryota"/>
</dbReference>
<dbReference type="GeneTree" id="ENSGT01120000271819"/>
<dbReference type="HOGENOM" id="CLU_009579_13_0_1"/>
<dbReference type="InParanoid" id="Q01727"/>
<dbReference type="OMA" id="VTFFCTT"/>
<dbReference type="OrthoDB" id="5970330at2759"/>
<dbReference type="PhylomeDB" id="Q01727"/>
<dbReference type="TreeFam" id="TF332646"/>
<dbReference type="Reactome" id="R-MMU-375276">
    <property type="pathway name" value="Peptide ligand-binding receptors"/>
</dbReference>
<dbReference type="Reactome" id="R-MMU-418555">
    <property type="pathway name" value="G alpha (s) signalling events"/>
</dbReference>
<dbReference type="BioGRID-ORCS" id="17199">
    <property type="hits" value="5 hits in 116 CRISPR screens"/>
</dbReference>
<dbReference type="ChiTaRS" id="Mc1r">
    <property type="organism name" value="mouse"/>
</dbReference>
<dbReference type="PRO" id="PR:Q01727"/>
<dbReference type="Proteomes" id="UP000000589">
    <property type="component" value="Chromosome 8"/>
</dbReference>
<dbReference type="RNAct" id="Q01727">
    <property type="molecule type" value="protein"/>
</dbReference>
<dbReference type="Bgee" id="ENSMUSG00000074037">
    <property type="expression patterns" value="Expressed in hair follicle and 10 other cell types or tissues"/>
</dbReference>
<dbReference type="ExpressionAtlas" id="Q01727">
    <property type="expression patterns" value="baseline and differential"/>
</dbReference>
<dbReference type="GO" id="GO:0005886">
    <property type="term" value="C:plasma membrane"/>
    <property type="evidence" value="ECO:0000250"/>
    <property type="project" value="UniProtKB"/>
</dbReference>
<dbReference type="GO" id="GO:0042562">
    <property type="term" value="F:hormone binding"/>
    <property type="evidence" value="ECO:0007669"/>
    <property type="project" value="Ensembl"/>
</dbReference>
<dbReference type="GO" id="GO:0004977">
    <property type="term" value="F:melanocortin receptor activity"/>
    <property type="evidence" value="ECO:0000314"/>
    <property type="project" value="BHF-UCL"/>
</dbReference>
<dbReference type="GO" id="GO:0004980">
    <property type="term" value="F:melanocyte-stimulating hormone receptor activity"/>
    <property type="evidence" value="ECO:0000314"/>
    <property type="project" value="MGI"/>
</dbReference>
<dbReference type="GO" id="GO:0031625">
    <property type="term" value="F:ubiquitin protein ligase binding"/>
    <property type="evidence" value="ECO:0007669"/>
    <property type="project" value="Ensembl"/>
</dbReference>
<dbReference type="GO" id="GO:0007189">
    <property type="term" value="P:adenylate cyclase-activating G protein-coupled receptor signaling pathway"/>
    <property type="evidence" value="ECO:0007669"/>
    <property type="project" value="Ensembl"/>
</dbReference>
<dbReference type="GO" id="GO:0035556">
    <property type="term" value="P:intracellular signal transduction"/>
    <property type="evidence" value="ECO:0000314"/>
    <property type="project" value="BHF-UCL"/>
</dbReference>
<dbReference type="GO" id="GO:0042438">
    <property type="term" value="P:melanin biosynthetic process"/>
    <property type="evidence" value="ECO:0000315"/>
    <property type="project" value="MGI"/>
</dbReference>
<dbReference type="GO" id="GO:0032720">
    <property type="term" value="P:negative regulation of tumor necrosis factor production"/>
    <property type="evidence" value="ECO:0007669"/>
    <property type="project" value="Ensembl"/>
</dbReference>
<dbReference type="GO" id="GO:0007200">
    <property type="term" value="P:phospholipase C-activating G protein-coupled receptor signaling pathway"/>
    <property type="evidence" value="ECO:0000314"/>
    <property type="project" value="BHF-UCL"/>
</dbReference>
<dbReference type="GO" id="GO:0141163">
    <property type="term" value="P:positive regulation of cAMP/PKA signal transduction"/>
    <property type="evidence" value="ECO:0000314"/>
    <property type="project" value="BHF-UCL"/>
</dbReference>
<dbReference type="GO" id="GO:2000253">
    <property type="term" value="P:positive regulation of feeding behavior"/>
    <property type="evidence" value="ECO:0007669"/>
    <property type="project" value="Ensembl"/>
</dbReference>
<dbReference type="GO" id="GO:0045944">
    <property type="term" value="P:positive regulation of transcription by RNA polymerase II"/>
    <property type="evidence" value="ECO:0000314"/>
    <property type="project" value="BHF-UCL"/>
</dbReference>
<dbReference type="GO" id="GO:0019233">
    <property type="term" value="P:sensory perception of pain"/>
    <property type="evidence" value="ECO:0000315"/>
    <property type="project" value="MGI"/>
</dbReference>
<dbReference type="GO" id="GO:0070914">
    <property type="term" value="P:UV-damage excision repair"/>
    <property type="evidence" value="ECO:0007669"/>
    <property type="project" value="Ensembl"/>
</dbReference>
<dbReference type="FunFam" id="1.20.1070.10:FF:000211">
    <property type="entry name" value="Melanocyte-stimulating hormone receptor"/>
    <property type="match status" value="1"/>
</dbReference>
<dbReference type="Gene3D" id="1.20.1070.10">
    <property type="entry name" value="Rhodopsin 7-helix transmembrane proteins"/>
    <property type="match status" value="1"/>
</dbReference>
<dbReference type="InterPro" id="IPR000276">
    <property type="entry name" value="GPCR_Rhodpsn"/>
</dbReference>
<dbReference type="InterPro" id="IPR017452">
    <property type="entry name" value="GPCR_Rhodpsn_7TM"/>
</dbReference>
<dbReference type="InterPro" id="IPR001671">
    <property type="entry name" value="Melcrt_ACTH_rcpt"/>
</dbReference>
<dbReference type="InterPro" id="IPR000761">
    <property type="entry name" value="MSH_rcpt"/>
</dbReference>
<dbReference type="PANTHER" id="PTHR22750">
    <property type="entry name" value="G-PROTEIN COUPLED RECEPTOR"/>
    <property type="match status" value="1"/>
</dbReference>
<dbReference type="Pfam" id="PF00001">
    <property type="entry name" value="7tm_1"/>
    <property type="match status" value="1"/>
</dbReference>
<dbReference type="PRINTS" id="PR00237">
    <property type="entry name" value="GPCRRHODOPSN"/>
</dbReference>
<dbReference type="PRINTS" id="PR00534">
    <property type="entry name" value="MCRFAMILY"/>
</dbReference>
<dbReference type="PRINTS" id="PR00536">
    <property type="entry name" value="MELNOCYTESHR"/>
</dbReference>
<dbReference type="SMART" id="SM01381">
    <property type="entry name" value="7TM_GPCR_Srsx"/>
    <property type="match status" value="1"/>
</dbReference>
<dbReference type="SUPFAM" id="SSF81321">
    <property type="entry name" value="Family A G protein-coupled receptor-like"/>
    <property type="match status" value="1"/>
</dbReference>
<dbReference type="PROSITE" id="PS00237">
    <property type="entry name" value="G_PROTEIN_RECEP_F1_1"/>
    <property type="match status" value="1"/>
</dbReference>
<dbReference type="PROSITE" id="PS50262">
    <property type="entry name" value="G_PROTEIN_RECEP_F1_2"/>
    <property type="match status" value="1"/>
</dbReference>
<name>MSHR_MOUSE</name>